<organism>
    <name type="scientific">Zea mays</name>
    <name type="common">Maize</name>
    <dbReference type="NCBI Taxonomy" id="4577"/>
    <lineage>
        <taxon>Eukaryota</taxon>
        <taxon>Viridiplantae</taxon>
        <taxon>Streptophyta</taxon>
        <taxon>Embryophyta</taxon>
        <taxon>Tracheophyta</taxon>
        <taxon>Spermatophyta</taxon>
        <taxon>Magnoliopsida</taxon>
        <taxon>Liliopsida</taxon>
        <taxon>Poales</taxon>
        <taxon>Poaceae</taxon>
        <taxon>PACMAD clade</taxon>
        <taxon>Panicoideae</taxon>
        <taxon>Andropogonodae</taxon>
        <taxon>Andropogoneae</taxon>
        <taxon>Tripsacinae</taxon>
        <taxon>Zea</taxon>
    </lineage>
</organism>
<proteinExistence type="evidence at transcript level"/>
<dbReference type="EMBL" id="AY536124">
    <property type="protein sequence ID" value="AAT09813.1"/>
    <property type="molecule type" value="mRNA"/>
</dbReference>
<dbReference type="EMBL" id="AC213370">
    <property type="status" value="NOT_ANNOTATED_CDS"/>
    <property type="molecule type" value="Genomic_DNA"/>
</dbReference>
<dbReference type="SMR" id="Q6JB12"/>
<dbReference type="STRING" id="4577.Q6JB12"/>
<dbReference type="InParanoid" id="Q6JB12"/>
<dbReference type="Proteomes" id="UP000007305">
    <property type="component" value="Unplaced"/>
</dbReference>
<dbReference type="ExpressionAtlas" id="Q6JB12">
    <property type="expression patterns" value="baseline and differential"/>
</dbReference>
<dbReference type="InterPro" id="IPR056205">
    <property type="entry name" value="Meg"/>
</dbReference>
<dbReference type="Pfam" id="PF24153">
    <property type="entry name" value="Meg"/>
    <property type="match status" value="1"/>
</dbReference>
<reference key="1">
    <citation type="journal article" date="2004" name="Plant Cell">
        <title>maternally expressed gene1 is a novel maize endosperm transfer cell-specific gene with a maternal parent-of-origin pattern of expression.</title>
        <authorList>
            <person name="Gutierrez-Marcos J.F."/>
            <person name="Costa L.M."/>
            <person name="Biderre-Petit C."/>
            <person name="Khbaya B."/>
            <person name="O'Sullivan D.M."/>
            <person name="Wormald M."/>
            <person name="Perez P."/>
            <person name="Dickinson H.G."/>
        </authorList>
    </citation>
    <scope>NUCLEOTIDE SEQUENCE [MRNA]</scope>
    <scope>TISSUE SPECIFICITY</scope>
    <scope>DEVELOPMENTAL STAGE</scope>
    <scope>GENE FAMILY</scope>
    <scope>NOMENCLATURE</scope>
</reference>
<reference key="2">
    <citation type="journal article" date="2009" name="Science">
        <title>The B73 maize genome: complexity, diversity, and dynamics.</title>
        <authorList>
            <person name="Schnable P.S."/>
            <person name="Ware D."/>
            <person name="Fulton R.S."/>
            <person name="Stein J.C."/>
            <person name="Wei F."/>
            <person name="Pasternak S."/>
            <person name="Liang C."/>
            <person name="Zhang J."/>
            <person name="Fulton L."/>
            <person name="Graves T.A."/>
            <person name="Minx P."/>
            <person name="Reily A.D."/>
            <person name="Courtney L."/>
            <person name="Kruchowski S.S."/>
            <person name="Tomlinson C."/>
            <person name="Strong C."/>
            <person name="Delehaunty K."/>
            <person name="Fronick C."/>
            <person name="Courtney B."/>
            <person name="Rock S.M."/>
            <person name="Belter E."/>
            <person name="Du F."/>
            <person name="Kim K."/>
            <person name="Abbott R.M."/>
            <person name="Cotton M."/>
            <person name="Levy A."/>
            <person name="Marchetto P."/>
            <person name="Ochoa K."/>
            <person name="Jackson S.M."/>
            <person name="Gillam B."/>
            <person name="Chen W."/>
            <person name="Yan L."/>
            <person name="Higginbotham J."/>
            <person name="Cardenas M."/>
            <person name="Waligorski J."/>
            <person name="Applebaum E."/>
            <person name="Phelps L."/>
            <person name="Falcone J."/>
            <person name="Kanchi K."/>
            <person name="Thane T."/>
            <person name="Scimone A."/>
            <person name="Thane N."/>
            <person name="Henke J."/>
            <person name="Wang T."/>
            <person name="Ruppert J."/>
            <person name="Shah N."/>
            <person name="Rotter K."/>
            <person name="Hodges J."/>
            <person name="Ingenthron E."/>
            <person name="Cordes M."/>
            <person name="Kohlberg S."/>
            <person name="Sgro J."/>
            <person name="Delgado B."/>
            <person name="Mead K."/>
            <person name="Chinwalla A."/>
            <person name="Leonard S."/>
            <person name="Crouse K."/>
            <person name="Collura K."/>
            <person name="Kudrna D."/>
            <person name="Currie J."/>
            <person name="He R."/>
            <person name="Angelova A."/>
            <person name="Rajasekar S."/>
            <person name="Mueller T."/>
            <person name="Lomeli R."/>
            <person name="Scara G."/>
            <person name="Ko A."/>
            <person name="Delaney K."/>
            <person name="Wissotski M."/>
            <person name="Lopez G."/>
            <person name="Campos D."/>
            <person name="Braidotti M."/>
            <person name="Ashley E."/>
            <person name="Golser W."/>
            <person name="Kim H."/>
            <person name="Lee S."/>
            <person name="Lin J."/>
            <person name="Dujmic Z."/>
            <person name="Kim W."/>
            <person name="Talag J."/>
            <person name="Zuccolo A."/>
            <person name="Fan C."/>
            <person name="Sebastian A."/>
            <person name="Kramer M."/>
            <person name="Spiegel L."/>
            <person name="Nascimento L."/>
            <person name="Zutavern T."/>
            <person name="Miller B."/>
            <person name="Ambroise C."/>
            <person name="Muller S."/>
            <person name="Spooner W."/>
            <person name="Narechania A."/>
            <person name="Ren L."/>
            <person name="Wei S."/>
            <person name="Kumari S."/>
            <person name="Faga B."/>
            <person name="Levy M.J."/>
            <person name="McMahan L."/>
            <person name="Van Buren P."/>
            <person name="Vaughn M.W."/>
            <person name="Ying K."/>
            <person name="Yeh C.-T."/>
            <person name="Emrich S.J."/>
            <person name="Jia Y."/>
            <person name="Kalyanaraman A."/>
            <person name="Hsia A.-P."/>
            <person name="Barbazuk W.B."/>
            <person name="Baucom R.S."/>
            <person name="Brutnell T.P."/>
            <person name="Carpita N.C."/>
            <person name="Chaparro C."/>
            <person name="Chia J.-M."/>
            <person name="Deragon J.-M."/>
            <person name="Estill J.C."/>
            <person name="Fu Y."/>
            <person name="Jeddeloh J.A."/>
            <person name="Han Y."/>
            <person name="Lee H."/>
            <person name="Li P."/>
            <person name="Lisch D.R."/>
            <person name="Liu S."/>
            <person name="Liu Z."/>
            <person name="Nagel D.H."/>
            <person name="McCann M.C."/>
            <person name="SanMiguel P."/>
            <person name="Myers A.M."/>
            <person name="Nettleton D."/>
            <person name="Nguyen J."/>
            <person name="Penning B.W."/>
            <person name="Ponnala L."/>
            <person name="Schneider K.L."/>
            <person name="Schwartz D.C."/>
            <person name="Sharma A."/>
            <person name="Soderlund C."/>
            <person name="Springer N.M."/>
            <person name="Sun Q."/>
            <person name="Wang H."/>
            <person name="Waterman M."/>
            <person name="Westerman R."/>
            <person name="Wolfgruber T.K."/>
            <person name="Yang L."/>
            <person name="Yu Y."/>
            <person name="Zhang L."/>
            <person name="Zhou S."/>
            <person name="Zhu Q."/>
            <person name="Bennetzen J.L."/>
            <person name="Dawe R.K."/>
            <person name="Jiang J."/>
            <person name="Jiang N."/>
            <person name="Presting G.G."/>
            <person name="Wessler S.R."/>
            <person name="Aluru S."/>
            <person name="Martienssen R.A."/>
            <person name="Clifton S.W."/>
            <person name="McCombie W.R."/>
            <person name="Wing R.A."/>
            <person name="Wilson R.K."/>
        </authorList>
    </citation>
    <scope>NUCLEOTIDE SEQUENCE [LARGE SCALE GENOMIC DNA]</scope>
    <source>
        <strain>cv. B73</strain>
    </source>
</reference>
<evidence type="ECO:0000250" key="1"/>
<evidence type="ECO:0000255" key="2"/>
<evidence type="ECO:0000269" key="3">
    <source>
    </source>
</evidence>
<evidence type="ECO:0000305" key="4"/>
<protein>
    <recommendedName>
        <fullName>Protein MATERNALLY EXPRESSED GENE 4</fullName>
    </recommendedName>
</protein>
<accession>Q6JB12</accession>
<sequence>MEYRKRVDALVFFSLLLLGYFAAHAHGKAKEGIMQGNGARCVVGFPPCKDNKCYCCIGGRTHARYSTMAECSHACF</sequence>
<keyword id="KW-1015">Disulfide bond</keyword>
<keyword id="KW-1185">Reference proteome</keyword>
<keyword id="KW-0732">Signal</keyword>
<gene>
    <name type="primary">MEG4</name>
    <name evidence="4" type="ORF">GRMZM2G123153</name>
</gene>
<feature type="signal peptide" evidence="2">
    <location>
        <begin position="1"/>
        <end position="27"/>
    </location>
</feature>
<feature type="chain" id="PRO_0000430076" description="Protein MATERNALLY EXPRESSED GENE 4">
    <location>
        <begin position="28"/>
        <end position="76"/>
    </location>
</feature>
<feature type="disulfide bond" evidence="1">
    <location>
        <begin position="53"/>
        <end position="75"/>
    </location>
</feature>
<comment type="tissue specificity">
    <text evidence="3">Expressed exclusively in endosperm.</text>
</comment>
<comment type="developmental stage">
    <text evidence="3">Expressed from 4 to 20 days after pollination.</text>
</comment>
<comment type="similarity">
    <text evidence="4">Belongs to the MEG family.</text>
</comment>
<name>MEG4_MAIZE</name>